<feature type="signal peptide" evidence="3">
    <location>
        <begin position="1"/>
        <end position="23"/>
    </location>
</feature>
<feature type="chain" id="PRO_0000030429" description="Thiosulfate sulfurtransferase YnjE">
    <location>
        <begin position="24"/>
        <end position="435"/>
    </location>
</feature>
<feature type="domain" description="Rhodanese 1" evidence="2">
    <location>
        <begin position="36"/>
        <end position="138"/>
    </location>
</feature>
<feature type="domain" description="Rhodanese 2" evidence="2">
    <location>
        <begin position="164"/>
        <end position="270"/>
    </location>
</feature>
<feature type="domain" description="Rhodanese 3" evidence="2">
    <location>
        <begin position="304"/>
        <end position="425"/>
    </location>
</feature>
<feature type="active site" description="Cysteine persulfide intermediate" evidence="2 4">
    <location>
        <position position="385"/>
    </location>
</feature>
<feature type="binding site" evidence="1">
    <location>
        <position position="390"/>
    </location>
    <ligand>
        <name>substrate</name>
    </ligand>
</feature>
<feature type="mutagenesis site" description="Loss of activity." evidence="4">
    <original>C</original>
    <variation>A</variation>
    <location>
        <position position="385"/>
    </location>
</feature>
<feature type="helix" evidence="7">
    <location>
        <begin position="32"/>
        <end position="37"/>
    </location>
</feature>
<feature type="strand" evidence="7">
    <location>
        <begin position="41"/>
        <end position="44"/>
    </location>
</feature>
<feature type="helix" evidence="7">
    <location>
        <begin position="48"/>
        <end position="52"/>
    </location>
</feature>
<feature type="strand" evidence="8">
    <location>
        <begin position="63"/>
        <end position="65"/>
    </location>
</feature>
<feature type="helix" evidence="7">
    <location>
        <begin position="73"/>
        <end position="78"/>
    </location>
</feature>
<feature type="helix" evidence="7">
    <location>
        <begin position="81"/>
        <end position="90"/>
    </location>
</feature>
<feature type="strand" evidence="7">
    <location>
        <begin position="99"/>
        <end position="103"/>
    </location>
</feature>
<feature type="helix" evidence="7">
    <location>
        <begin position="105"/>
        <end position="117"/>
    </location>
</feature>
<feature type="strand" evidence="7">
    <location>
        <begin position="123"/>
        <end position="126"/>
    </location>
</feature>
<feature type="turn" evidence="7">
    <location>
        <begin position="127"/>
        <end position="130"/>
    </location>
</feature>
<feature type="helix" evidence="7">
    <location>
        <begin position="133"/>
        <end position="135"/>
    </location>
</feature>
<feature type="helix" evidence="7">
    <location>
        <begin position="142"/>
        <end position="144"/>
    </location>
</feature>
<feature type="helix" evidence="7">
    <location>
        <begin position="148"/>
        <end position="155"/>
    </location>
</feature>
<feature type="strand" evidence="7">
    <location>
        <begin position="168"/>
        <end position="177"/>
    </location>
</feature>
<feature type="helix" evidence="7">
    <location>
        <begin position="180"/>
        <end position="183"/>
    </location>
</feature>
<feature type="strand" evidence="7">
    <location>
        <begin position="190"/>
        <end position="193"/>
    </location>
</feature>
<feature type="helix" evidence="7">
    <location>
        <begin position="194"/>
        <end position="196"/>
    </location>
</feature>
<feature type="turn" evidence="7">
    <location>
        <begin position="200"/>
        <end position="203"/>
    </location>
</feature>
<feature type="helix" evidence="7">
    <location>
        <begin position="208"/>
        <end position="217"/>
    </location>
</feature>
<feature type="strand" evidence="7">
    <location>
        <begin position="224"/>
        <end position="229"/>
    </location>
</feature>
<feature type="helix" evidence="7">
    <location>
        <begin position="233"/>
        <end position="246"/>
    </location>
</feature>
<feature type="strand" evidence="7">
    <location>
        <begin position="251"/>
        <end position="254"/>
    </location>
</feature>
<feature type="turn" evidence="7">
    <location>
        <begin position="255"/>
        <end position="257"/>
    </location>
</feature>
<feature type="helix" evidence="7">
    <location>
        <begin position="258"/>
        <end position="263"/>
    </location>
</feature>
<feature type="helix" evidence="7">
    <location>
        <begin position="290"/>
        <end position="292"/>
    </location>
</feature>
<feature type="helix" evidence="7">
    <location>
        <begin position="296"/>
        <end position="300"/>
    </location>
</feature>
<feature type="turn" evidence="7">
    <location>
        <begin position="301"/>
        <end position="304"/>
    </location>
</feature>
<feature type="strand" evidence="7">
    <location>
        <begin position="306"/>
        <end position="312"/>
    </location>
</feature>
<feature type="helix" evidence="7">
    <location>
        <begin position="316"/>
        <end position="319"/>
    </location>
</feature>
<feature type="strand" evidence="7">
    <location>
        <begin position="333"/>
        <end position="335"/>
    </location>
</feature>
<feature type="helix" evidence="7">
    <location>
        <begin position="351"/>
        <end position="353"/>
    </location>
</feature>
<feature type="strand" evidence="7">
    <location>
        <begin position="358"/>
        <end position="360"/>
    </location>
</feature>
<feature type="helix" evidence="7">
    <location>
        <begin position="363"/>
        <end position="371"/>
    </location>
</feature>
<feature type="turn" evidence="7">
    <location>
        <begin position="372"/>
        <end position="374"/>
    </location>
</feature>
<feature type="strand" evidence="7">
    <location>
        <begin position="379"/>
        <end position="384"/>
    </location>
</feature>
<feature type="strand" evidence="7">
    <location>
        <begin position="386"/>
        <end position="388"/>
    </location>
</feature>
<feature type="helix" evidence="7">
    <location>
        <begin position="389"/>
        <end position="400"/>
    </location>
</feature>
<feature type="strand" evidence="7">
    <location>
        <begin position="404"/>
        <end position="411"/>
    </location>
</feature>
<feature type="helix" evidence="7">
    <location>
        <begin position="412"/>
        <end position="416"/>
    </location>
</feature>
<feature type="helix" evidence="8">
    <location>
        <begin position="431"/>
        <end position="434"/>
    </location>
</feature>
<gene>
    <name type="primary">ynjE</name>
    <name type="ordered locus">b1757</name>
    <name type="ordered locus">JW5287</name>
</gene>
<accession>P78067</accession>
<accession>P78171</accession>
<proteinExistence type="evidence at protein level"/>
<evidence type="ECO:0000250" key="1"/>
<evidence type="ECO:0000255" key="2">
    <source>
        <dbReference type="PROSITE-ProRule" id="PRU00173"/>
    </source>
</evidence>
<evidence type="ECO:0000255" key="3">
    <source>
        <dbReference type="PROSITE-ProRule" id="PRU00303"/>
    </source>
</evidence>
<evidence type="ECO:0000269" key="4">
    <source>
    </source>
</evidence>
<evidence type="ECO:0000305" key="5"/>
<evidence type="ECO:0000305" key="6">
    <source>
    </source>
</evidence>
<evidence type="ECO:0007829" key="7">
    <source>
        <dbReference type="PDB" id="2WLR"/>
    </source>
</evidence>
<evidence type="ECO:0007829" key="8">
    <source>
        <dbReference type="PDB" id="3IPO"/>
    </source>
</evidence>
<protein>
    <recommendedName>
        <fullName>Thiosulfate sulfurtransferase YnjE</fullName>
        <ecNumber>2.8.1.1</ecNumber>
    </recommendedName>
</protein>
<reference key="1">
    <citation type="journal article" date="1997" name="Science">
        <title>The complete genome sequence of Escherichia coli K-12.</title>
        <authorList>
            <person name="Blattner F.R."/>
            <person name="Plunkett G. III"/>
            <person name="Bloch C.A."/>
            <person name="Perna N.T."/>
            <person name="Burland V."/>
            <person name="Riley M."/>
            <person name="Collado-Vides J."/>
            <person name="Glasner J.D."/>
            <person name="Rode C.K."/>
            <person name="Mayhew G.F."/>
            <person name="Gregor J."/>
            <person name="Davis N.W."/>
            <person name="Kirkpatrick H.A."/>
            <person name="Goeden M.A."/>
            <person name="Rose D.J."/>
            <person name="Mau B."/>
            <person name="Shao Y."/>
        </authorList>
    </citation>
    <scope>NUCLEOTIDE SEQUENCE [LARGE SCALE GENOMIC DNA]</scope>
    <source>
        <strain>K12 / MG1655 / ATCC 47076</strain>
    </source>
</reference>
<reference key="2">
    <citation type="journal article" date="2006" name="Mol. Syst. Biol.">
        <title>Highly accurate genome sequences of Escherichia coli K-12 strains MG1655 and W3110.</title>
        <authorList>
            <person name="Hayashi K."/>
            <person name="Morooka N."/>
            <person name="Yamamoto Y."/>
            <person name="Fujita K."/>
            <person name="Isono K."/>
            <person name="Choi S."/>
            <person name="Ohtsubo E."/>
            <person name="Baba T."/>
            <person name="Wanner B.L."/>
            <person name="Mori H."/>
            <person name="Horiuchi T."/>
        </authorList>
    </citation>
    <scope>NUCLEOTIDE SEQUENCE [LARGE SCALE GENOMIC DNA]</scope>
    <source>
        <strain>K12 / W3110 / ATCC 27325 / DSM 5911</strain>
    </source>
</reference>
<reference key="3">
    <citation type="journal article" date="1996" name="DNA Res.">
        <title>A 570-kb DNA sequence of the Escherichia coli K-12 genome corresponding to the 28.0-40.1 min region on the linkage map.</title>
        <authorList>
            <person name="Aiba H."/>
            <person name="Baba T."/>
            <person name="Fujita K."/>
            <person name="Hayashi K."/>
            <person name="Inada T."/>
            <person name="Isono K."/>
            <person name="Itoh T."/>
            <person name="Kasai H."/>
            <person name="Kashimoto K."/>
            <person name="Kimura S."/>
            <person name="Kitakawa M."/>
            <person name="Kitagawa M."/>
            <person name="Makino K."/>
            <person name="Miki T."/>
            <person name="Mizobuchi K."/>
            <person name="Mori H."/>
            <person name="Mori T."/>
            <person name="Motomura K."/>
            <person name="Nakade S."/>
            <person name="Nakamura Y."/>
            <person name="Nashimoto H."/>
            <person name="Nishio Y."/>
            <person name="Oshima T."/>
            <person name="Saito N."/>
            <person name="Sampei G."/>
            <person name="Seki Y."/>
            <person name="Sivasundaram S."/>
            <person name="Tagami H."/>
            <person name="Takeda J."/>
            <person name="Takemoto K."/>
            <person name="Takeuchi Y."/>
            <person name="Wada C."/>
            <person name="Yamamoto Y."/>
            <person name="Horiuchi T."/>
        </authorList>
    </citation>
    <scope>NUCLEOTIDE SEQUENCE [LARGE SCALE GENOMIC DNA] OF 79-435</scope>
    <source>
        <strain>K12 / W3110 / ATCC 27325 / DSM 5911</strain>
    </source>
</reference>
<reference key="4">
    <citation type="journal article" date="2009" name="Protein Sci.">
        <title>Crystal structure of YnjE from Escherichia coli, a sulfurtransferase with three rhodanese domains.</title>
        <authorList>
            <person name="Hanzelmann P."/>
            <person name="Dahl J.U."/>
            <person name="Kuper J."/>
            <person name="Urban A."/>
            <person name="Muller-Theissen U."/>
            <person name="Leimkuhler S."/>
            <person name="Schindelin H."/>
        </authorList>
    </citation>
    <scope>X-RAY CRYSTALLOGRAPHY (2.4 ANGSTROMS) OF 20-435</scope>
    <scope>CATALYTIC ACTIVITY</scope>
    <scope>SUBUNIT</scope>
    <scope>ACTIVE SITE</scope>
    <scope>MUTAGENESIS OF CYS-385</scope>
</reference>
<dbReference type="EC" id="2.8.1.1"/>
<dbReference type="EMBL" id="U00096">
    <property type="protein sequence ID" value="AAC74827.2"/>
    <property type="molecule type" value="Genomic_DNA"/>
</dbReference>
<dbReference type="EMBL" id="AP009048">
    <property type="protein sequence ID" value="BAA15548.2"/>
    <property type="molecule type" value="Genomic_DNA"/>
</dbReference>
<dbReference type="PIR" id="E64935">
    <property type="entry name" value="E64935"/>
</dbReference>
<dbReference type="RefSeq" id="NP_416271.4">
    <property type="nucleotide sequence ID" value="NC_000913.3"/>
</dbReference>
<dbReference type="RefSeq" id="WP_001350515.1">
    <property type="nucleotide sequence ID" value="NZ_LN832404.1"/>
</dbReference>
<dbReference type="PDB" id="2WLR">
    <property type="method" value="X-ray"/>
    <property type="resolution" value="1.45 A"/>
    <property type="chains" value="A=24-435"/>
</dbReference>
<dbReference type="PDB" id="2WLX">
    <property type="method" value="X-ray"/>
    <property type="resolution" value="1.90 A"/>
    <property type="chains" value="A=24-435"/>
</dbReference>
<dbReference type="PDB" id="3IPO">
    <property type="method" value="X-ray"/>
    <property type="resolution" value="2.40 A"/>
    <property type="chains" value="A/B=20-435"/>
</dbReference>
<dbReference type="PDB" id="3IPP">
    <property type="method" value="X-ray"/>
    <property type="resolution" value="2.40 A"/>
    <property type="chains" value="A/B=20-435"/>
</dbReference>
<dbReference type="PDBsum" id="2WLR"/>
<dbReference type="PDBsum" id="2WLX"/>
<dbReference type="PDBsum" id="3IPO"/>
<dbReference type="PDBsum" id="3IPP"/>
<dbReference type="SMR" id="P78067"/>
<dbReference type="BioGRID" id="4262126">
    <property type="interactions" value="207"/>
</dbReference>
<dbReference type="DIP" id="DIP-12782N"/>
<dbReference type="FunCoup" id="P78067">
    <property type="interactions" value="40"/>
</dbReference>
<dbReference type="IntAct" id="P78067">
    <property type="interactions" value="1"/>
</dbReference>
<dbReference type="STRING" id="511145.b1757"/>
<dbReference type="jPOST" id="P78067"/>
<dbReference type="PaxDb" id="511145-b1757"/>
<dbReference type="EnsemblBacteria" id="AAC74827">
    <property type="protein sequence ID" value="AAC74827"/>
    <property type="gene ID" value="b1757"/>
</dbReference>
<dbReference type="GeneID" id="946505"/>
<dbReference type="KEGG" id="ecj:JW5287"/>
<dbReference type="KEGG" id="eco:b1757"/>
<dbReference type="KEGG" id="ecoc:C3026_10030"/>
<dbReference type="PATRIC" id="fig|1411691.4.peg.498"/>
<dbReference type="EchoBASE" id="EB3763"/>
<dbReference type="eggNOG" id="COG2897">
    <property type="taxonomic scope" value="Bacteria"/>
</dbReference>
<dbReference type="HOGENOM" id="CLU_031618_2_0_6"/>
<dbReference type="InParanoid" id="P78067"/>
<dbReference type="OMA" id="YMGVKDV"/>
<dbReference type="OrthoDB" id="9781034at2"/>
<dbReference type="PhylomeDB" id="P78067"/>
<dbReference type="BioCyc" id="EcoCyc:G6952-MONOMER"/>
<dbReference type="BioCyc" id="MetaCyc:G6952-MONOMER"/>
<dbReference type="EvolutionaryTrace" id="P78067"/>
<dbReference type="PRO" id="PR:P78067"/>
<dbReference type="Proteomes" id="UP000000625">
    <property type="component" value="Chromosome"/>
</dbReference>
<dbReference type="GO" id="GO:0042597">
    <property type="term" value="C:periplasmic space"/>
    <property type="evidence" value="ECO:0007669"/>
    <property type="project" value="UniProtKB-SubCell"/>
</dbReference>
<dbReference type="GO" id="GO:0016783">
    <property type="term" value="F:sulfurtransferase activity"/>
    <property type="evidence" value="ECO:0000314"/>
    <property type="project" value="EcoCyc"/>
</dbReference>
<dbReference type="GO" id="GO:0004792">
    <property type="term" value="F:thiosulfate-cyanide sulfurtransferase activity"/>
    <property type="evidence" value="ECO:0000318"/>
    <property type="project" value="GO_Central"/>
</dbReference>
<dbReference type="CDD" id="cd01448">
    <property type="entry name" value="TST_Repeat_1"/>
    <property type="match status" value="1"/>
</dbReference>
<dbReference type="CDD" id="cd01449">
    <property type="entry name" value="TST_Repeat_2"/>
    <property type="match status" value="1"/>
</dbReference>
<dbReference type="FunFam" id="3.40.250.10:FF:000041">
    <property type="entry name" value="Sulfurtransferase"/>
    <property type="match status" value="1"/>
</dbReference>
<dbReference type="FunFam" id="3.40.250.10:FF:000043">
    <property type="entry name" value="Sulfurtransferase"/>
    <property type="match status" value="1"/>
</dbReference>
<dbReference type="Gene3D" id="3.40.250.10">
    <property type="entry name" value="Rhodanese-like domain"/>
    <property type="match status" value="3"/>
</dbReference>
<dbReference type="InterPro" id="IPR001763">
    <property type="entry name" value="Rhodanese-like_dom"/>
</dbReference>
<dbReference type="InterPro" id="IPR036873">
    <property type="entry name" value="Rhodanese-like_dom_sf"/>
</dbReference>
<dbReference type="InterPro" id="IPR001307">
    <property type="entry name" value="Thiosulphate_STrfase_CS"/>
</dbReference>
<dbReference type="InterPro" id="IPR045078">
    <property type="entry name" value="TST/MPST-like"/>
</dbReference>
<dbReference type="PANTHER" id="PTHR11364:SF27">
    <property type="entry name" value="SULFURTRANSFERASE"/>
    <property type="match status" value="1"/>
</dbReference>
<dbReference type="PANTHER" id="PTHR11364">
    <property type="entry name" value="THIOSULFATE SULFERTANSFERASE"/>
    <property type="match status" value="1"/>
</dbReference>
<dbReference type="Pfam" id="PF00581">
    <property type="entry name" value="Rhodanese"/>
    <property type="match status" value="2"/>
</dbReference>
<dbReference type="SMART" id="SM00450">
    <property type="entry name" value="RHOD"/>
    <property type="match status" value="3"/>
</dbReference>
<dbReference type="SUPFAM" id="SSF52821">
    <property type="entry name" value="Rhodanese/Cell cycle control phosphatase"/>
    <property type="match status" value="3"/>
</dbReference>
<dbReference type="PROSITE" id="PS51257">
    <property type="entry name" value="PROKAR_LIPOPROTEIN"/>
    <property type="match status" value="1"/>
</dbReference>
<dbReference type="PROSITE" id="PS00380">
    <property type="entry name" value="RHODANESE_1"/>
    <property type="match status" value="1"/>
</dbReference>
<dbReference type="PROSITE" id="PS00683">
    <property type="entry name" value="RHODANESE_2"/>
    <property type="match status" value="1"/>
</dbReference>
<dbReference type="PROSITE" id="PS50206">
    <property type="entry name" value="RHODANESE_3"/>
    <property type="match status" value="3"/>
</dbReference>
<sequence>MKRVSQMTALAMALGLACASSWAAELAKPLTLDQLQQQNGKAIDTRPSAFYNGWPQTLNGPSGHELAALNLSASWLDKMSTEQLNAWIKQHNLKTDAPVALYGNDKDVDAVKTRLQKAGLTHISILSDALSEPSRLQKLPHFEQLVYPQWLHDLQQGKEVTAKPAGDWKVIEAAWGAPKLYLISHIPGADYIDTNEVESEPLWNKVSDEQLKAMLAKHGIRHDTTVILYGRDVYAAARVAQIMLYAGVKDVRLLDGGWQTWSDAGLPVERGTPPKVKAEPDFGVKIPAQPQLMLDMEQARGLLHRQDASLVSIRSWPEFIGTTSGYSYIKPKGEIAGARWGHAGSDSTHMEDFHNPDGTMRSADDITAMWKAWNIKPEQQVSFYCGTGWRASETFMYARAMGWKNVSVYDGGWYEWSSDPKNPVATGERGPDSSK</sequence>
<organism>
    <name type="scientific">Escherichia coli (strain K12)</name>
    <dbReference type="NCBI Taxonomy" id="83333"/>
    <lineage>
        <taxon>Bacteria</taxon>
        <taxon>Pseudomonadati</taxon>
        <taxon>Pseudomonadota</taxon>
        <taxon>Gammaproteobacteria</taxon>
        <taxon>Enterobacterales</taxon>
        <taxon>Enterobacteriaceae</taxon>
        <taxon>Escherichia</taxon>
    </lineage>
</organism>
<comment type="catalytic activity">
    <reaction evidence="4">
        <text>thiosulfate + hydrogen cyanide = thiocyanate + sulfite + 2 H(+)</text>
        <dbReference type="Rhea" id="RHEA:16881"/>
        <dbReference type="ChEBI" id="CHEBI:15378"/>
        <dbReference type="ChEBI" id="CHEBI:17359"/>
        <dbReference type="ChEBI" id="CHEBI:18022"/>
        <dbReference type="ChEBI" id="CHEBI:18407"/>
        <dbReference type="ChEBI" id="CHEBI:33542"/>
        <dbReference type="EC" id="2.8.1.1"/>
    </reaction>
</comment>
<comment type="subunit">
    <text evidence="6">Monomer.</text>
</comment>
<comment type="subcellular location">
    <subcellularLocation>
        <location evidence="5">Periplasm</location>
    </subcellularLocation>
</comment>
<comment type="miscellaneous">
    <text>In vitro, YnjE can be efficiently persulfurated by the cysteine desulfurase IscS.</text>
</comment>
<keyword id="KW-0002">3D-structure</keyword>
<keyword id="KW-0574">Periplasm</keyword>
<keyword id="KW-1185">Reference proteome</keyword>
<keyword id="KW-0677">Repeat</keyword>
<keyword id="KW-0732">Signal</keyword>
<keyword id="KW-0808">Transferase</keyword>
<name>YNJE_ECOLI</name>